<accession>Q1RJU1</accession>
<organism>
    <name type="scientific">Rickettsia bellii (strain RML369-C)</name>
    <dbReference type="NCBI Taxonomy" id="336407"/>
    <lineage>
        <taxon>Bacteria</taxon>
        <taxon>Pseudomonadati</taxon>
        <taxon>Pseudomonadota</taxon>
        <taxon>Alphaproteobacteria</taxon>
        <taxon>Rickettsiales</taxon>
        <taxon>Rickettsiaceae</taxon>
        <taxon>Rickettsieae</taxon>
        <taxon>Rickettsia</taxon>
        <taxon>belli group</taxon>
    </lineage>
</organism>
<gene>
    <name evidence="1" type="primary">recO</name>
    <name type="ordered locus">RBE_0292</name>
</gene>
<keyword id="KW-0227">DNA damage</keyword>
<keyword id="KW-0233">DNA recombination</keyword>
<keyword id="KW-0234">DNA repair</keyword>
<protein>
    <recommendedName>
        <fullName evidence="1">DNA repair protein RecO</fullName>
    </recommendedName>
    <alternativeName>
        <fullName evidence="1">Recombination protein O</fullName>
    </alternativeName>
</protein>
<name>RECO_RICBR</name>
<proteinExistence type="inferred from homology"/>
<reference key="1">
    <citation type="journal article" date="2006" name="PLoS Genet.">
        <title>Genome sequence of Rickettsia bellii illuminates the role of amoebae in gene exchanges between intracellular pathogens.</title>
        <authorList>
            <person name="Ogata H."/>
            <person name="La Scola B."/>
            <person name="Audic S."/>
            <person name="Renesto P."/>
            <person name="Blanc G."/>
            <person name="Robert C."/>
            <person name="Fournier P.-E."/>
            <person name="Claverie J.-M."/>
            <person name="Raoult D."/>
        </authorList>
    </citation>
    <scope>NUCLEOTIDE SEQUENCE [LARGE SCALE GENOMIC DNA]</scope>
    <source>
        <strain>RML369-C</strain>
    </source>
</reference>
<comment type="function">
    <text evidence="1">Involved in DNA repair and RecF pathway recombination.</text>
</comment>
<comment type="similarity">
    <text evidence="1">Belongs to the RecO family.</text>
</comment>
<evidence type="ECO:0000255" key="1">
    <source>
        <dbReference type="HAMAP-Rule" id="MF_00201"/>
    </source>
</evidence>
<feature type="chain" id="PRO_1000193418" description="DNA repair protein RecO">
    <location>
        <begin position="1"/>
        <end position="241"/>
    </location>
</feature>
<sequence length="241" mass="27966">MNIKDIGVIIAKKPLKENTFIITVFTKNHGLYSGVAKESSKKSKFIYQEGNVVDFLWQARLHEHIGIAKCELVKSYIGHFIINKAKLYAFNSVISLIKELFHEREEHYNFFSLLINYLDNLAKNFCFHDYINFELALLAEMGYELDFTKCGVSNTTQDLAYLSPKSGRAVSYEVGAPYKDKLLPLPKFLLSGNDKITLEEKRQALNLTSYFFNRYLFHNHRQPEIRQVFVEYILEKDAITA</sequence>
<dbReference type="EMBL" id="CP000087">
    <property type="protein sequence ID" value="ABE04373.1"/>
    <property type="molecule type" value="Genomic_DNA"/>
</dbReference>
<dbReference type="RefSeq" id="WP_011476984.1">
    <property type="nucleotide sequence ID" value="NC_007940.1"/>
</dbReference>
<dbReference type="SMR" id="Q1RJU1"/>
<dbReference type="KEGG" id="rbe:RBE_0292"/>
<dbReference type="eggNOG" id="COG1381">
    <property type="taxonomic scope" value="Bacteria"/>
</dbReference>
<dbReference type="HOGENOM" id="CLU_086029_0_0_5"/>
<dbReference type="OrthoDB" id="9804792at2"/>
<dbReference type="Proteomes" id="UP000001951">
    <property type="component" value="Chromosome"/>
</dbReference>
<dbReference type="GO" id="GO:0043590">
    <property type="term" value="C:bacterial nucleoid"/>
    <property type="evidence" value="ECO:0007669"/>
    <property type="project" value="TreeGrafter"/>
</dbReference>
<dbReference type="GO" id="GO:0006310">
    <property type="term" value="P:DNA recombination"/>
    <property type="evidence" value="ECO:0007669"/>
    <property type="project" value="UniProtKB-UniRule"/>
</dbReference>
<dbReference type="GO" id="GO:0006302">
    <property type="term" value="P:double-strand break repair"/>
    <property type="evidence" value="ECO:0007669"/>
    <property type="project" value="TreeGrafter"/>
</dbReference>
<dbReference type="Gene3D" id="2.40.50.140">
    <property type="entry name" value="Nucleic acid-binding proteins"/>
    <property type="match status" value="1"/>
</dbReference>
<dbReference type="Gene3D" id="1.20.1440.120">
    <property type="entry name" value="Recombination protein O, C-terminal domain"/>
    <property type="match status" value="1"/>
</dbReference>
<dbReference type="HAMAP" id="MF_00201">
    <property type="entry name" value="RecO"/>
    <property type="match status" value="1"/>
</dbReference>
<dbReference type="InterPro" id="IPR037278">
    <property type="entry name" value="ARFGAP/RecO"/>
</dbReference>
<dbReference type="InterPro" id="IPR022572">
    <property type="entry name" value="DNA_rep/recomb_RecO_N"/>
</dbReference>
<dbReference type="InterPro" id="IPR012340">
    <property type="entry name" value="NA-bd_OB-fold"/>
</dbReference>
<dbReference type="InterPro" id="IPR003717">
    <property type="entry name" value="RecO"/>
</dbReference>
<dbReference type="InterPro" id="IPR042242">
    <property type="entry name" value="RecO_C"/>
</dbReference>
<dbReference type="NCBIfam" id="TIGR00613">
    <property type="entry name" value="reco"/>
    <property type="match status" value="1"/>
</dbReference>
<dbReference type="PANTHER" id="PTHR33991">
    <property type="entry name" value="DNA REPAIR PROTEIN RECO"/>
    <property type="match status" value="1"/>
</dbReference>
<dbReference type="PANTHER" id="PTHR33991:SF1">
    <property type="entry name" value="DNA REPAIR PROTEIN RECO"/>
    <property type="match status" value="1"/>
</dbReference>
<dbReference type="Pfam" id="PF02565">
    <property type="entry name" value="RecO_C"/>
    <property type="match status" value="1"/>
</dbReference>
<dbReference type="Pfam" id="PF11967">
    <property type="entry name" value="RecO_N"/>
    <property type="match status" value="1"/>
</dbReference>
<dbReference type="SUPFAM" id="SSF57863">
    <property type="entry name" value="ArfGap/RecO-like zinc finger"/>
    <property type="match status" value="1"/>
</dbReference>
<dbReference type="SUPFAM" id="SSF50249">
    <property type="entry name" value="Nucleic acid-binding proteins"/>
    <property type="match status" value="1"/>
</dbReference>